<protein>
    <recommendedName>
        <fullName evidence="3">Protein N-terminal asparagine amidohydrolase</fullName>
        <ecNumber evidence="4">3.5.1.121</ecNumber>
    </recommendedName>
    <alternativeName>
        <fullName evidence="4">Protein NH2-terminal asparagine amidohydrolase</fullName>
    </alternativeName>
    <alternativeName>
        <fullName evidence="4">Protein NH2-terminal asparagine deamidase</fullName>
    </alternativeName>
</protein>
<reference key="1">
    <citation type="journal article" date="1999" name="Nature">
        <title>Sequence and analysis of chromosome 2 of the plant Arabidopsis thaliana.</title>
        <authorList>
            <person name="Lin X."/>
            <person name="Kaul S."/>
            <person name="Rounsley S.D."/>
            <person name="Shea T.P."/>
            <person name="Benito M.-I."/>
            <person name="Town C.D."/>
            <person name="Fujii C.Y."/>
            <person name="Mason T.M."/>
            <person name="Bowman C.L."/>
            <person name="Barnstead M.E."/>
            <person name="Feldblyum T.V."/>
            <person name="Buell C.R."/>
            <person name="Ketchum K.A."/>
            <person name="Lee J.J."/>
            <person name="Ronning C.M."/>
            <person name="Koo H.L."/>
            <person name="Moffat K.S."/>
            <person name="Cronin L.A."/>
            <person name="Shen M."/>
            <person name="Pai G."/>
            <person name="Van Aken S."/>
            <person name="Umayam L."/>
            <person name="Tallon L.J."/>
            <person name="Gill J.E."/>
            <person name="Adams M.D."/>
            <person name="Carrera A.J."/>
            <person name="Creasy T.H."/>
            <person name="Goodman H.M."/>
            <person name="Somerville C.R."/>
            <person name="Copenhaver G.P."/>
            <person name="Preuss D."/>
            <person name="Nierman W.C."/>
            <person name="White O."/>
            <person name="Eisen J.A."/>
            <person name="Salzberg S.L."/>
            <person name="Fraser C.M."/>
            <person name="Venter J.C."/>
        </authorList>
    </citation>
    <scope>NUCLEOTIDE SEQUENCE [LARGE SCALE GENOMIC DNA]</scope>
    <source>
        <strain>cv. Columbia</strain>
    </source>
</reference>
<reference key="2">
    <citation type="journal article" date="2017" name="Plant J.">
        <title>Araport11: a complete reannotation of the Arabidopsis thaliana reference genome.</title>
        <authorList>
            <person name="Cheng C.Y."/>
            <person name="Krishnakumar V."/>
            <person name="Chan A.P."/>
            <person name="Thibaud-Nissen F."/>
            <person name="Schobel S."/>
            <person name="Town C.D."/>
        </authorList>
    </citation>
    <scope>GENOME REANNOTATION</scope>
    <source>
        <strain>cv. Columbia</strain>
    </source>
</reference>
<reference key="3">
    <citation type="journal article" date="2002" name="Science">
        <title>Functional annotation of a full-length Arabidopsis cDNA collection.</title>
        <authorList>
            <person name="Seki M."/>
            <person name="Narusaka M."/>
            <person name="Kamiya A."/>
            <person name="Ishida J."/>
            <person name="Satou M."/>
            <person name="Sakurai T."/>
            <person name="Nakajima M."/>
            <person name="Enju A."/>
            <person name="Akiyama K."/>
            <person name="Oono Y."/>
            <person name="Muramatsu M."/>
            <person name="Hayashizaki Y."/>
            <person name="Kawai J."/>
            <person name="Carninci P."/>
            <person name="Itoh M."/>
            <person name="Ishii Y."/>
            <person name="Arakawa T."/>
            <person name="Shibata K."/>
            <person name="Shinagawa A."/>
            <person name="Shinozaki K."/>
        </authorList>
    </citation>
    <scope>NUCLEOTIDE SEQUENCE [LARGE SCALE MRNA]</scope>
    <source>
        <strain>cv. Columbia</strain>
    </source>
</reference>
<reference key="4">
    <citation type="journal article" date="2003" name="Science">
        <title>Empirical analysis of transcriptional activity in the Arabidopsis genome.</title>
        <authorList>
            <person name="Yamada K."/>
            <person name="Lim J."/>
            <person name="Dale J.M."/>
            <person name="Chen H."/>
            <person name="Shinn P."/>
            <person name="Palm C.J."/>
            <person name="Southwick A.M."/>
            <person name="Wu H.C."/>
            <person name="Kim C.J."/>
            <person name="Nguyen M."/>
            <person name="Pham P.K."/>
            <person name="Cheuk R.F."/>
            <person name="Karlin-Newmann G."/>
            <person name="Liu S.X."/>
            <person name="Lam B."/>
            <person name="Sakano H."/>
            <person name="Wu T."/>
            <person name="Yu G."/>
            <person name="Miranda M."/>
            <person name="Quach H.L."/>
            <person name="Tripp M."/>
            <person name="Chang C.H."/>
            <person name="Lee J.M."/>
            <person name="Toriumi M.J."/>
            <person name="Chan M.M."/>
            <person name="Tang C.C."/>
            <person name="Onodera C.S."/>
            <person name="Deng J.M."/>
            <person name="Akiyama K."/>
            <person name="Ansari Y."/>
            <person name="Arakawa T."/>
            <person name="Banh J."/>
            <person name="Banno F."/>
            <person name="Bowser L."/>
            <person name="Brooks S.Y."/>
            <person name="Carninci P."/>
            <person name="Chao Q."/>
            <person name="Choy N."/>
            <person name="Enju A."/>
            <person name="Goldsmith A.D."/>
            <person name="Gurjal M."/>
            <person name="Hansen N.F."/>
            <person name="Hayashizaki Y."/>
            <person name="Johnson-Hopson C."/>
            <person name="Hsuan V.W."/>
            <person name="Iida K."/>
            <person name="Karnes M."/>
            <person name="Khan S."/>
            <person name="Koesema E."/>
            <person name="Ishida J."/>
            <person name="Jiang P.X."/>
            <person name="Jones T."/>
            <person name="Kawai J."/>
            <person name="Kamiya A."/>
            <person name="Meyers C."/>
            <person name="Nakajima M."/>
            <person name="Narusaka M."/>
            <person name="Seki M."/>
            <person name="Sakurai T."/>
            <person name="Satou M."/>
            <person name="Tamse R."/>
            <person name="Vaysberg M."/>
            <person name="Wallender E.K."/>
            <person name="Wong C."/>
            <person name="Yamamura Y."/>
            <person name="Yuan S."/>
            <person name="Shinozaki K."/>
            <person name="Davis R.W."/>
            <person name="Theologis A."/>
            <person name="Ecker J.R."/>
        </authorList>
    </citation>
    <scope>NUCLEOTIDE SEQUENCE [LARGE SCALE MRNA]</scope>
    <source>
        <strain>cv. Columbia</strain>
    </source>
</reference>
<reference key="5">
    <citation type="submission" date="2002-03" db="EMBL/GenBank/DDBJ databases">
        <title>Full-length cDNA from Arabidopsis thaliana.</title>
        <authorList>
            <person name="Brover V.V."/>
            <person name="Troukhan M.E."/>
            <person name="Alexandrov N.A."/>
            <person name="Lu Y.-P."/>
            <person name="Flavell R.B."/>
            <person name="Feldmann K.A."/>
        </authorList>
    </citation>
    <scope>NUCLEOTIDE SEQUENCE [LARGE SCALE MRNA]</scope>
</reference>
<reference key="6">
    <citation type="journal article" date="2019" name="New Phytol.">
        <title>Distinct branches of the N-end rule pathway modulate the plant immune response.</title>
        <authorList>
            <person name="Vicente J."/>
            <person name="Mendiondo G.M."/>
            <person name="Pauwels J."/>
            <person name="Pastor V."/>
            <person name="Izquierdo Y."/>
            <person name="Naumann C."/>
            <person name="Movahedi M."/>
            <person name="Rooney D."/>
            <person name="Gibbs D.J."/>
            <person name="Smart K."/>
            <person name="Bachmair A."/>
            <person name="Gray J.E."/>
            <person name="Dissmeyer N."/>
            <person name="Castresana C."/>
            <person name="Ray R.V."/>
            <person name="Gevaert K."/>
            <person name="Holdsworth M.J."/>
        </authorList>
    </citation>
    <scope>FUNCTION</scope>
</reference>
<proteinExistence type="evidence at transcript level"/>
<evidence type="ECO:0000250" key="1">
    <source>
        <dbReference type="UniProtKB" id="Q64311"/>
    </source>
</evidence>
<evidence type="ECO:0000269" key="2">
    <source>
    </source>
</evidence>
<evidence type="ECO:0000303" key="3">
    <source>
    </source>
</evidence>
<evidence type="ECO:0000305" key="4"/>
<evidence type="ECO:0000312" key="5">
    <source>
        <dbReference type="Araport" id="AT2G44420"/>
    </source>
</evidence>
<evidence type="ECO:0000312" key="6">
    <source>
        <dbReference type="EMBL" id="AEC10418.1"/>
    </source>
</evidence>
<keyword id="KW-0378">Hydrolase</keyword>
<keyword id="KW-1185">Reference proteome</keyword>
<name>NTAN1_ARATH</name>
<feature type="chain" id="PRO_0000445545" description="Protein N-terminal asparagine amidohydrolase">
    <location>
        <begin position="1"/>
        <end position="347"/>
    </location>
</feature>
<feature type="sequence conflict" description="In Ref. 5; AAM63281." evidence="4" ref="5">
    <original>Q</original>
    <variation>R</variation>
    <location>
        <position position="286"/>
    </location>
</feature>
<accession>O64876</accession>
<accession>Q8LDD1</accession>
<gene>
    <name evidence="3" type="primary">NTAN1</name>
    <name evidence="5" type="ordered locus">At2g44420</name>
    <name evidence="6" type="ORF">F4I1.23</name>
</gene>
<comment type="function">
    <text evidence="1 2">N-terminal asparagine deamidase that mediates deamidation of N-terminal asparagine residues to aspartate. Required for the ubiquitin-dependent turnover of intracellular proteins that initiate with Met-Asn. These proteins are acetylated on the retained initiator methionine and can subsequently be modified by the removal of N-acetyl methionine by acylaminoacid hydrolase (AAH). Conversion of the resulting N-terminal asparagine to aspartate by NTAN1 renders the protein susceptible to arginylation, polyubiquitination and degradation as specified by the N-end rule. This enzyme does not act on substrates with internal or C-terminal asparagines and does not act on glutamine residues in any position (By similarity). Does not seem to be involved in immune response, unlike the N-terminal glutamine amidohydrolase NTAQ1 (PubMed:30117535).</text>
</comment>
<comment type="catalytic activity">
    <reaction evidence="4">
        <text>N-terminal L-asparaginyl-[protein] + H2O + H(+) = N-terminal L-aspartyl-[protein] + NH4(+)</text>
        <dbReference type="Rhea" id="RHEA:50676"/>
        <dbReference type="Rhea" id="RHEA-COMP:12669"/>
        <dbReference type="Rhea" id="RHEA-COMP:12776"/>
        <dbReference type="ChEBI" id="CHEBI:15377"/>
        <dbReference type="ChEBI" id="CHEBI:15378"/>
        <dbReference type="ChEBI" id="CHEBI:28938"/>
        <dbReference type="ChEBI" id="CHEBI:50348"/>
        <dbReference type="ChEBI" id="CHEBI:64720"/>
        <dbReference type="EC" id="3.5.1.121"/>
    </reaction>
</comment>
<organism>
    <name type="scientific">Arabidopsis thaliana</name>
    <name type="common">Mouse-ear cress</name>
    <dbReference type="NCBI Taxonomy" id="3702"/>
    <lineage>
        <taxon>Eukaryota</taxon>
        <taxon>Viridiplantae</taxon>
        <taxon>Streptophyta</taxon>
        <taxon>Embryophyta</taxon>
        <taxon>Tracheophyta</taxon>
        <taxon>Spermatophyta</taxon>
        <taxon>Magnoliopsida</taxon>
        <taxon>eudicotyledons</taxon>
        <taxon>Gunneridae</taxon>
        <taxon>Pentapetalae</taxon>
        <taxon>rosids</taxon>
        <taxon>malvids</taxon>
        <taxon>Brassicales</taxon>
        <taxon>Brassicaceae</taxon>
        <taxon>Camelineae</taxon>
        <taxon>Arabidopsis</taxon>
    </lineage>
</organism>
<sequence length="347" mass="39174">MIYVGGVQFLDESSSFSLSSSSQGSSLLVDVMSHPVITLASDSFKNLEEKNVSFDESDSESSTKDRYVYIFQREFAVVNPALVDFVGTDEATTCVGLVIRNRKSGMTSVAHMDSPEIVDLGISQMLLLVLQDDVDAELDVHMVGGYEDVDIKNADGVGDYAKPEGYSFPLCCKLVETLQKRRENFHIQTLFILGHNTKLDSQANTCPIFNGCLVNTSTGAILPASFNRTSRCPDEIVRRIRVSSSFEDSSWKGKLLDTYDTKTDRFIIAPCRWTMRLIEYVWELNQLTDEEILTNCSTSPSAEGPDFVNSLRRNWGYLLKYPEWSKTFPRRQPRVFERTVDGHWKKC</sequence>
<dbReference type="EC" id="3.5.1.121" evidence="4"/>
<dbReference type="EMBL" id="AC004521">
    <property type="protein sequence ID" value="AAC16088.2"/>
    <property type="molecule type" value="Genomic_DNA"/>
</dbReference>
<dbReference type="EMBL" id="CP002685">
    <property type="protein sequence ID" value="AEC10418.1"/>
    <property type="molecule type" value="Genomic_DNA"/>
</dbReference>
<dbReference type="EMBL" id="AK117511">
    <property type="protein sequence ID" value="BAC42174.1"/>
    <property type="molecule type" value="mRNA"/>
</dbReference>
<dbReference type="EMBL" id="BT005103">
    <property type="protein sequence ID" value="AAO50636.1"/>
    <property type="molecule type" value="mRNA"/>
</dbReference>
<dbReference type="EMBL" id="AY086075">
    <property type="protein sequence ID" value="AAM63281.1"/>
    <property type="molecule type" value="mRNA"/>
</dbReference>
<dbReference type="PIR" id="T02397">
    <property type="entry name" value="T02397"/>
</dbReference>
<dbReference type="RefSeq" id="NP_566017.1">
    <property type="nucleotide sequence ID" value="NM_130005.3"/>
</dbReference>
<dbReference type="SMR" id="O64876"/>
<dbReference type="FunCoup" id="O64876">
    <property type="interactions" value="2947"/>
</dbReference>
<dbReference type="STRING" id="3702.O64876"/>
<dbReference type="PaxDb" id="3702-AT2G44420.1"/>
<dbReference type="EnsemblPlants" id="AT2G44420.1">
    <property type="protein sequence ID" value="AT2G44420.1"/>
    <property type="gene ID" value="AT2G44420"/>
</dbReference>
<dbReference type="GeneID" id="819049"/>
<dbReference type="Gramene" id="AT2G44420.1">
    <property type="protein sequence ID" value="AT2G44420.1"/>
    <property type="gene ID" value="AT2G44420"/>
</dbReference>
<dbReference type="KEGG" id="ath:AT2G44420"/>
<dbReference type="Araport" id="AT2G44420"/>
<dbReference type="TAIR" id="AT2G44420">
    <property type="gene designation" value="NTAN1"/>
</dbReference>
<dbReference type="eggNOG" id="ENOG502QSQW">
    <property type="taxonomic scope" value="Eukaryota"/>
</dbReference>
<dbReference type="HOGENOM" id="CLU_066533_0_0_1"/>
<dbReference type="InParanoid" id="O64876"/>
<dbReference type="OrthoDB" id="539995at2759"/>
<dbReference type="PhylomeDB" id="O64876"/>
<dbReference type="PRO" id="PR:O64876"/>
<dbReference type="Proteomes" id="UP000006548">
    <property type="component" value="Chromosome 2"/>
</dbReference>
<dbReference type="ExpressionAtlas" id="O64876">
    <property type="expression patterns" value="baseline and differential"/>
</dbReference>
<dbReference type="GO" id="GO:0008418">
    <property type="term" value="F:protein-N-terminal asparagine amidohydrolase activity"/>
    <property type="evidence" value="ECO:0007669"/>
    <property type="project" value="UniProtKB-EC"/>
</dbReference>
<dbReference type="InterPro" id="IPR026750">
    <property type="entry name" value="NTAN1"/>
</dbReference>
<dbReference type="PANTHER" id="PTHR12498">
    <property type="entry name" value="N-TERMINAL ASPARAGINE AMIDOHYDROLASE"/>
    <property type="match status" value="1"/>
</dbReference>
<dbReference type="PANTHER" id="PTHR12498:SF0">
    <property type="entry name" value="PROTEIN N-TERMINAL ASPARAGINE AMIDOHYDROLASE"/>
    <property type="match status" value="1"/>
</dbReference>
<dbReference type="Pfam" id="PF14736">
    <property type="entry name" value="N_Asn_amidohyd"/>
    <property type="match status" value="1"/>
</dbReference>